<sequence length="288" mass="32526">MAASPYSIFAVQLLLLASWMLSSSSSNFNQDFNIAWGGGRARILNNGELVTLSLDKASGSGFRSKNLYLFGKIDMQLKLVPGNSAGTVTTYYLSSEGSVRDEIDFEFLGNLTGEPYTLHTNVYSHGKGEREQQFRLWFDPAADFHTYSILWNSKTIVFYVDQTPVREFKNMESIGVPYLRQPMRLFSSIWNADEWATRGGLIKTDWTQAPFTTSYRNFRADNACVWAAKASSCGLAAGGNAWLSVELDAKSRGRLRWVRRNQMIYDYCVDGKRFPRGVPPECKLNLHI</sequence>
<accession>A0A067YMX8</accession>
<proteinExistence type="evidence at protein level"/>
<gene>
    <name evidence="9 11" type="primary">XTH8</name>
</gene>
<protein>
    <recommendedName>
        <fullName evidence="10">Xyloglucan endotransglucosylase protein 8</fullName>
        <shortName evidence="10">XET protein 8</shortName>
        <ecNumber evidence="7 8">2.4.1.207</ecNumber>
    </recommendedName>
    <alternativeName>
        <fullName evidence="9">DkXTH8</fullName>
    </alternativeName>
    <alternativeName>
        <fullName evidence="10">Xyloglucan endotransglucosylase/hydrolase protein 8</fullName>
        <shortName evidence="10">XTH protein 8</shortName>
    </alternativeName>
</protein>
<comment type="function">
    <text evidence="8">Catalyzes xyloglucan endotransglycosylation (XET). Cleaves and religates xyloglucan polymers. Does not catalyze xyloglucan endohydrolysis (XEH). Overexpression in Arabidopsis transgenic plants causes accelerated dark-induced leaf senescence and higher lipid peroxidation of the leaf cells. Overexpression in transgenic tomato plants promotes fruit ripening and softening. Probably involved in cell wall restructuring during postharvest fruit softening.</text>
</comment>
<comment type="catalytic activity">
    <reaction evidence="7 8">
        <text>breaks a beta-(1-&gt;4) bond in the backbone of a xyloglucan and transfers the xyloglucanyl segment on to O-4 of the non-reducing terminal glucose residue of an acceptor, which can be a xyloglucan or an oligosaccharide of xyloglucan.</text>
        <dbReference type="EC" id="2.4.1.207"/>
    </reaction>
</comment>
<comment type="biophysicochemical properties">
    <phDependence>
        <text evidence="8">Optimum pH is around 6. Activity decreases sharply when the pH is lowered from 5 to 4.</text>
    </phDependence>
    <temperatureDependence>
        <text evidence="8">Optimum temperature is between 30-40 degrees Celsius.</text>
    </temperatureDependence>
</comment>
<comment type="subcellular location">
    <subcellularLocation>
        <location evidence="7 8">Secreted</location>
        <location evidence="7 8">Cell wall</location>
    </subcellularLocation>
    <subcellularLocation>
        <location evidence="7">Secreted</location>
        <location evidence="7">Extracellular space</location>
        <location evidence="7">Apoplast</location>
    </subcellularLocation>
</comment>
<comment type="tissue specificity">
    <text evidence="8">Highly expressed in mature fruits. Very low expression in leaves, flowers, calyces and stems.</text>
</comment>
<comment type="developmental stage">
    <text evidence="8">Expressed during fruit ripening. Fruits harvested 140 days after full bloom show much higher expression levels than fruits harvested 20, 60 or 100 days after full bloom. Expression in fruits increases rapidly during storage and is highest on day 12, simultaneously with a dramatic fruit softening.</text>
</comment>
<comment type="induction">
    <text evidence="8">In fruits, expression increases by propylene or abscisic acid (ABA) treatment, and is highest on day 4 and 8 of storage, respectively. Expression decreases by 1-methylcyclopropene (1-MCP) or gibberellic acid (GA3) treatment during storage.</text>
</comment>
<comment type="PTM">
    <text evidence="7">Contains at least one intrachain disulfide bond essential for its enzymatic activity.</text>
</comment>
<comment type="similarity">
    <text evidence="10">Belongs to the glycosyl hydrolase 16 family. XTH group 2 subfamily.</text>
</comment>
<dbReference type="EC" id="2.4.1.207" evidence="7 8"/>
<dbReference type="EMBL" id="KF318888">
    <property type="protein sequence ID" value="AHE13905.1"/>
    <property type="molecule type" value="mRNA"/>
</dbReference>
<dbReference type="SMR" id="A0A067YMX8"/>
<dbReference type="GlyCosmos" id="A0A067YMX8">
    <property type="glycosylation" value="1 site, No reported glycans"/>
</dbReference>
<dbReference type="BRENDA" id="2.4.1.207">
    <property type="organism ID" value="7744"/>
</dbReference>
<dbReference type="GO" id="GO:0048046">
    <property type="term" value="C:apoplast"/>
    <property type="evidence" value="ECO:0007669"/>
    <property type="project" value="UniProtKB-SubCell"/>
</dbReference>
<dbReference type="GO" id="GO:0004553">
    <property type="term" value="F:hydrolase activity, hydrolyzing O-glycosyl compounds"/>
    <property type="evidence" value="ECO:0007669"/>
    <property type="project" value="InterPro"/>
</dbReference>
<dbReference type="GO" id="GO:0030247">
    <property type="term" value="F:polysaccharide binding"/>
    <property type="evidence" value="ECO:0000250"/>
    <property type="project" value="UniProtKB"/>
</dbReference>
<dbReference type="GO" id="GO:0016762">
    <property type="term" value="F:xyloglucan:xyloglucosyl transferase activity"/>
    <property type="evidence" value="ECO:0000314"/>
    <property type="project" value="UniProtKB"/>
</dbReference>
<dbReference type="GO" id="GO:0042546">
    <property type="term" value="P:cell wall biogenesis"/>
    <property type="evidence" value="ECO:0007669"/>
    <property type="project" value="InterPro"/>
</dbReference>
<dbReference type="GO" id="GO:0071555">
    <property type="term" value="P:cell wall organization"/>
    <property type="evidence" value="ECO:0000305"/>
    <property type="project" value="UniProtKB"/>
</dbReference>
<dbReference type="GO" id="GO:0071370">
    <property type="term" value="P:cellular response to gibberellin stimulus"/>
    <property type="evidence" value="ECO:0000270"/>
    <property type="project" value="UniProtKB"/>
</dbReference>
<dbReference type="GO" id="GO:0009835">
    <property type="term" value="P:fruit ripening"/>
    <property type="evidence" value="ECO:0000270"/>
    <property type="project" value="UniProtKB"/>
</dbReference>
<dbReference type="GO" id="GO:0009737">
    <property type="term" value="P:response to abscisic acid"/>
    <property type="evidence" value="ECO:0000270"/>
    <property type="project" value="UniProtKB"/>
</dbReference>
<dbReference type="GO" id="GO:2000899">
    <property type="term" value="P:xyloglucan catabolic process"/>
    <property type="evidence" value="ECO:0000314"/>
    <property type="project" value="UniProtKB"/>
</dbReference>
<dbReference type="CDD" id="cd02176">
    <property type="entry name" value="GH16_XET"/>
    <property type="match status" value="1"/>
</dbReference>
<dbReference type="FunFam" id="2.60.120.200:FF:000025">
    <property type="entry name" value="Xyloglucan endotransglucosylase/hydrolase"/>
    <property type="match status" value="1"/>
</dbReference>
<dbReference type="Gene3D" id="2.60.120.200">
    <property type="match status" value="1"/>
</dbReference>
<dbReference type="InterPro" id="IPR044791">
    <property type="entry name" value="Beta-glucanase/XTH"/>
</dbReference>
<dbReference type="InterPro" id="IPR013320">
    <property type="entry name" value="ConA-like_dom_sf"/>
</dbReference>
<dbReference type="InterPro" id="IPR000757">
    <property type="entry name" value="GH16"/>
</dbReference>
<dbReference type="InterPro" id="IPR008263">
    <property type="entry name" value="GH16_AS"/>
</dbReference>
<dbReference type="InterPro" id="IPR010713">
    <property type="entry name" value="XET_C"/>
</dbReference>
<dbReference type="InterPro" id="IPR016455">
    <property type="entry name" value="XTH"/>
</dbReference>
<dbReference type="PANTHER" id="PTHR31062">
    <property type="entry name" value="XYLOGLUCAN ENDOTRANSGLUCOSYLASE/HYDROLASE PROTEIN 8-RELATED"/>
    <property type="match status" value="1"/>
</dbReference>
<dbReference type="Pfam" id="PF00722">
    <property type="entry name" value="Glyco_hydro_16"/>
    <property type="match status" value="1"/>
</dbReference>
<dbReference type="Pfam" id="PF06955">
    <property type="entry name" value="XET_C"/>
    <property type="match status" value="1"/>
</dbReference>
<dbReference type="PIRSF" id="PIRSF005604">
    <property type="entry name" value="XET"/>
    <property type="match status" value="1"/>
</dbReference>
<dbReference type="SUPFAM" id="SSF49899">
    <property type="entry name" value="Concanavalin A-like lectins/glucanases"/>
    <property type="match status" value="1"/>
</dbReference>
<dbReference type="PROSITE" id="PS01034">
    <property type="entry name" value="GH16_1"/>
    <property type="match status" value="1"/>
</dbReference>
<dbReference type="PROSITE" id="PS51762">
    <property type="entry name" value="GH16_2"/>
    <property type="match status" value="1"/>
</dbReference>
<organism evidence="11">
    <name type="scientific">Diospyros kaki</name>
    <name type="common">Kaki persimmon</name>
    <name type="synonym">Diospyros chinensis</name>
    <dbReference type="NCBI Taxonomy" id="35925"/>
    <lineage>
        <taxon>Eukaryota</taxon>
        <taxon>Viridiplantae</taxon>
        <taxon>Streptophyta</taxon>
        <taxon>Embryophyta</taxon>
        <taxon>Tracheophyta</taxon>
        <taxon>Spermatophyta</taxon>
        <taxon>Magnoliopsida</taxon>
        <taxon>eudicotyledons</taxon>
        <taxon>Gunneridae</taxon>
        <taxon>Pentapetalae</taxon>
        <taxon>asterids</taxon>
        <taxon>Ericales</taxon>
        <taxon>Ebenaceae</taxon>
        <taxon>Diospyros</taxon>
    </lineage>
</organism>
<evidence type="ECO:0000250" key="1">
    <source>
        <dbReference type="UniProtKB" id="Q8GZD5"/>
    </source>
</evidence>
<evidence type="ECO:0000255" key="2">
    <source>
        <dbReference type="PIRSR" id="PIRSR005604-1"/>
    </source>
</evidence>
<evidence type="ECO:0000255" key="3">
    <source>
        <dbReference type="PIRSR" id="PIRSR005604-2"/>
    </source>
</evidence>
<evidence type="ECO:0000255" key="4">
    <source>
        <dbReference type="PROSITE-ProRule" id="PRU00498"/>
    </source>
</evidence>
<evidence type="ECO:0000255" key="5">
    <source>
        <dbReference type="PROSITE-ProRule" id="PRU01098"/>
    </source>
</evidence>
<evidence type="ECO:0000255" key="6">
    <source>
        <dbReference type="PROSITE-ProRule" id="PRU10064"/>
    </source>
</evidence>
<evidence type="ECO:0000255" key="7">
    <source>
        <dbReference type="RuleBase" id="RU361120"/>
    </source>
</evidence>
<evidence type="ECO:0000269" key="8">
    <source>
    </source>
</evidence>
<evidence type="ECO:0000303" key="9">
    <source>
    </source>
</evidence>
<evidence type="ECO:0000305" key="10"/>
<evidence type="ECO:0000312" key="11">
    <source>
        <dbReference type="EMBL" id="AHE13905.1"/>
    </source>
</evidence>
<keyword id="KW-0052">Apoplast</keyword>
<keyword id="KW-0134">Cell wall</keyword>
<keyword id="KW-0961">Cell wall biogenesis/degradation</keyword>
<keyword id="KW-1015">Disulfide bond</keyword>
<keyword id="KW-0292">Fruit ripening</keyword>
<keyword id="KW-0325">Glycoprotein</keyword>
<keyword id="KW-0326">Glycosidase</keyword>
<keyword id="KW-0328">Glycosyltransferase</keyword>
<keyword id="KW-0378">Hydrolase</keyword>
<keyword id="KW-0964">Secreted</keyword>
<keyword id="KW-0732">Signal</keyword>
<keyword id="KW-0808">Transferase</keyword>
<feature type="signal peptide" evidence="7">
    <location>
        <begin position="1"/>
        <end position="25"/>
    </location>
</feature>
<feature type="chain" id="PRO_5005103795" description="Xyloglucan endotransglucosylase protein 8" evidence="7">
    <location>
        <begin position="26"/>
        <end position="288"/>
    </location>
</feature>
<feature type="domain" description="GH16" evidence="5 10">
    <location>
        <begin position="26"/>
        <end position="215"/>
    </location>
</feature>
<feature type="active site" description="Nucleophile" evidence="2 6">
    <location>
        <position position="102"/>
    </location>
</feature>
<feature type="active site" description="Proton donor" evidence="2 6">
    <location>
        <position position="106"/>
    </location>
</feature>
<feature type="binding site" evidence="1">
    <location>
        <position position="106"/>
    </location>
    <ligand>
        <name>xyloglucan</name>
        <dbReference type="ChEBI" id="CHEBI:18233"/>
    </ligand>
</feature>
<feature type="binding site" evidence="1">
    <location>
        <begin position="119"/>
        <end position="121"/>
    </location>
    <ligand>
        <name>xyloglucan</name>
        <dbReference type="ChEBI" id="CHEBI:18233"/>
    </ligand>
</feature>
<feature type="binding site" evidence="1">
    <location>
        <begin position="129"/>
        <end position="131"/>
    </location>
    <ligand>
        <name>xyloglucan</name>
        <dbReference type="ChEBI" id="CHEBI:18233"/>
    </ligand>
</feature>
<feature type="binding site" evidence="1">
    <location>
        <begin position="194"/>
        <end position="195"/>
    </location>
    <ligand>
        <name>xyloglucan</name>
        <dbReference type="ChEBI" id="CHEBI:18233"/>
    </ligand>
</feature>
<feature type="binding site" evidence="1">
    <location>
        <position position="199"/>
    </location>
    <ligand>
        <name>xyloglucan</name>
        <dbReference type="ChEBI" id="CHEBI:18233"/>
    </ligand>
</feature>
<feature type="binding site" evidence="1">
    <location>
        <position position="273"/>
    </location>
    <ligand>
        <name>xyloglucan</name>
        <dbReference type="ChEBI" id="CHEBI:18233"/>
    </ligand>
</feature>
<feature type="site" description="Important for catalytic activity" evidence="1">
    <location>
        <position position="104"/>
    </location>
</feature>
<feature type="glycosylation site" description="N-linked (GlcNAc...) asparagine" evidence="3 4">
    <location>
        <position position="110"/>
    </location>
</feature>
<feature type="disulfide bond" evidence="1">
    <location>
        <begin position="224"/>
        <end position="233"/>
    </location>
</feature>
<feature type="disulfide bond" evidence="1">
    <location>
        <begin position="268"/>
        <end position="282"/>
    </location>
</feature>
<name>XTH8_DIOKA</name>
<reference key="1">
    <citation type="journal article" date="2016" name="Sci. Rep.">
        <title>DkXTH8, a novel xyloglucan endotransglucosylase/hydrolase in persimmon, alters cell wall structure and promotes leaf senescence and fruit postharvest softening.</title>
        <authorList>
            <person name="Han Y."/>
            <person name="Ban Q."/>
            <person name="Li H."/>
            <person name="Hou Y."/>
            <person name="Jin M."/>
            <person name="Han S."/>
            <person name="Rao J."/>
        </authorList>
    </citation>
    <scope>NUCLEOTIDE SEQUENCE [MRNA]</scope>
    <scope>FUNCTION</scope>
    <scope>CATALYTIC ACTIVITY</scope>
    <scope>BIOPHYSICOCHEMICAL PROPERTIES</scope>
    <scope>SUBCELLULAR LOCATION</scope>
    <scope>TISSUE SPECIFICITY</scope>
    <scope>DEVELOPMENTAL STAGE</scope>
    <scope>INDUCTION</scope>
    <scope>PHYLOGENETIC ANALYSIS</scope>
    <source>
        <strain evidence="9">cv. Fuping Jianshi</strain>
        <tissue evidence="9">Fruit</tissue>
    </source>
</reference>